<gene>
    <name type="ordered locus">MT1780</name>
</gene>
<comment type="induction">
    <text evidence="1">A member of the dormancy regulon. Induced in response to reduced oxygen tension (hypoxia) and low levels of nitric oxide (NO).</text>
</comment>
<comment type="similarity">
    <text evidence="2">To M.tuberculosis Rv2632c.</text>
</comment>
<comment type="sequence caution" evidence="2">
    <conflict type="erroneous initiation">
        <sequence resource="EMBL-CDS" id="AAK46053"/>
    </conflict>
</comment>
<accession>P9WLS2</accession>
<accession>L0TA89</accession>
<accession>P64887</accession>
<accession>P71996</accession>
<protein>
    <recommendedName>
        <fullName>Uncharacterized protein MT1780</fullName>
    </recommendedName>
</protein>
<keyword id="KW-1185">Reference proteome</keyword>
<reference key="1">
    <citation type="journal article" date="2002" name="J. Bacteriol.">
        <title>Whole-genome comparison of Mycobacterium tuberculosis clinical and laboratory strains.</title>
        <authorList>
            <person name="Fleischmann R.D."/>
            <person name="Alland D."/>
            <person name="Eisen J.A."/>
            <person name="Carpenter L."/>
            <person name="White O."/>
            <person name="Peterson J.D."/>
            <person name="DeBoy R.T."/>
            <person name="Dodson R.J."/>
            <person name="Gwinn M.L."/>
            <person name="Haft D.H."/>
            <person name="Hickey E.K."/>
            <person name="Kolonay J.F."/>
            <person name="Nelson W.C."/>
            <person name="Umayam L.A."/>
            <person name="Ermolaeva M.D."/>
            <person name="Salzberg S.L."/>
            <person name="Delcher A."/>
            <person name="Utterback T.R."/>
            <person name="Weidman J.F."/>
            <person name="Khouri H.M."/>
            <person name="Gill J."/>
            <person name="Mikula A."/>
            <person name="Bishai W."/>
            <person name="Jacobs W.R. Jr."/>
            <person name="Venter J.C."/>
            <person name="Fraser C.M."/>
        </authorList>
    </citation>
    <scope>NUCLEOTIDE SEQUENCE [LARGE SCALE GENOMIC DNA]</scope>
    <source>
        <strain>CDC 1551 / Oshkosh</strain>
    </source>
</reference>
<reference key="2">
    <citation type="journal article" date="2003" name="J. Exp. Med.">
        <title>Inhibition of respiration by nitric oxide induces a Mycobacterium tuberculosis dormancy program.</title>
        <authorList>
            <person name="Voskuil M.I."/>
            <person name="Schnappinger D."/>
            <person name="Visconti K.C."/>
            <person name="Harrell M.I."/>
            <person name="Dolganov G.M."/>
            <person name="Sherman D.R."/>
            <person name="Schoolnik G.K."/>
        </authorList>
    </citation>
    <scope>INDUCTION BY NITRIC OXIDE (NO); BY HYPOXIA; IN MOUSE MODEL AND DORMANCY REGULON</scope>
    <source>
        <strain>CDC 1551 / Oshkosh</strain>
    </source>
</reference>
<sequence length="94" mass="10606">MCGDQSDHVLQHWTVDISIDEHEGLTRAKARLRWREKELVGVGLARLNPADRNVPEIGDELSVARALSDLGKRMLKVSTHDIEAVTHQPARLLY</sequence>
<feature type="chain" id="PRO_0000427429" description="Uncharacterized protein MT1780">
    <location>
        <begin position="1"/>
        <end position="94"/>
    </location>
</feature>
<evidence type="ECO:0000269" key="1">
    <source>
    </source>
</evidence>
<evidence type="ECO:0000305" key="2"/>
<organism>
    <name type="scientific">Mycobacterium tuberculosis (strain CDC 1551 / Oshkosh)</name>
    <dbReference type="NCBI Taxonomy" id="83331"/>
    <lineage>
        <taxon>Bacteria</taxon>
        <taxon>Bacillati</taxon>
        <taxon>Actinomycetota</taxon>
        <taxon>Actinomycetes</taxon>
        <taxon>Mycobacteriales</taxon>
        <taxon>Mycobacteriaceae</taxon>
        <taxon>Mycobacterium</taxon>
        <taxon>Mycobacterium tuberculosis complex</taxon>
    </lineage>
</organism>
<proteinExistence type="evidence at transcript level"/>
<dbReference type="EMBL" id="AE000516">
    <property type="protein sequence ID" value="AAK46053.1"/>
    <property type="status" value="ALT_INIT"/>
    <property type="molecule type" value="Genomic_DNA"/>
</dbReference>
<dbReference type="PIR" id="E70688">
    <property type="entry name" value="E70688"/>
</dbReference>
<dbReference type="RefSeq" id="WP_003408522.1">
    <property type="nucleotide sequence ID" value="NZ_KK341227.1"/>
</dbReference>
<dbReference type="SMR" id="P9WLS2"/>
<dbReference type="KEGG" id="mtc:MT1780"/>
<dbReference type="PATRIC" id="fig|83331.31.peg.1910"/>
<dbReference type="HOGENOM" id="CLU_1711193_0_0_11"/>
<dbReference type="EvolutionaryTrace" id="P9WLS2"/>
<dbReference type="Proteomes" id="UP000001020">
    <property type="component" value="Chromosome"/>
</dbReference>
<dbReference type="FunFam" id="3.30.160.240:FF:000001">
    <property type="entry name" value="DUF1876 domain-containing protein"/>
    <property type="match status" value="1"/>
</dbReference>
<dbReference type="Gene3D" id="3.30.160.240">
    <property type="entry name" value="Rv1738"/>
    <property type="match status" value="1"/>
</dbReference>
<dbReference type="InterPro" id="IPR015057">
    <property type="entry name" value="Rv2632c-like"/>
</dbReference>
<dbReference type="InterPro" id="IPR038070">
    <property type="entry name" value="Rv2632c-like_sf"/>
</dbReference>
<dbReference type="Pfam" id="PF08962">
    <property type="entry name" value="Rv2632c-like"/>
    <property type="match status" value="1"/>
</dbReference>
<dbReference type="SUPFAM" id="SSF143212">
    <property type="entry name" value="Rv2632c-like"/>
    <property type="match status" value="1"/>
</dbReference>
<name>Y1738_MYCTO</name>